<protein>
    <recommendedName>
        <fullName evidence="1">Nucleoside-triphosphatase THEP1</fullName>
        <shortName evidence="1">NTPase THEP1</shortName>
        <ecNumber evidence="1">3.6.1.15</ecNumber>
    </recommendedName>
    <alternativeName>
        <fullName evidence="1">Nucleoside triphosphate phosphohydrolase</fullName>
    </alternativeName>
</protein>
<proteinExistence type="inferred from homology"/>
<comment type="function">
    <text evidence="1">Has nucleotide phosphatase activity towards ATP, GTP, CTP, TTP and UTP. May hydrolyze nucleoside diphosphates with lower efficiency.</text>
</comment>
<comment type="catalytic activity">
    <reaction evidence="1">
        <text>a ribonucleoside 5'-triphosphate + H2O = a ribonucleoside 5'-diphosphate + phosphate + H(+)</text>
        <dbReference type="Rhea" id="RHEA:23680"/>
        <dbReference type="ChEBI" id="CHEBI:15377"/>
        <dbReference type="ChEBI" id="CHEBI:15378"/>
        <dbReference type="ChEBI" id="CHEBI:43474"/>
        <dbReference type="ChEBI" id="CHEBI:57930"/>
        <dbReference type="ChEBI" id="CHEBI:61557"/>
        <dbReference type="EC" id="3.6.1.15"/>
    </reaction>
</comment>
<comment type="similarity">
    <text evidence="1">Belongs to the THEP1 NTPase family.</text>
</comment>
<dbReference type="EC" id="3.6.1.15" evidence="1"/>
<dbReference type="EMBL" id="AP006878">
    <property type="protein sequence ID" value="BAD84746.1"/>
    <property type="molecule type" value="Genomic_DNA"/>
</dbReference>
<dbReference type="RefSeq" id="WP_011249512.1">
    <property type="nucleotide sequence ID" value="NC_006624.1"/>
</dbReference>
<dbReference type="SMR" id="Q5JF42"/>
<dbReference type="FunCoup" id="Q5JF42">
    <property type="interactions" value="83"/>
</dbReference>
<dbReference type="STRING" id="69014.TK0557"/>
<dbReference type="EnsemblBacteria" id="BAD84746">
    <property type="protein sequence ID" value="BAD84746"/>
    <property type="gene ID" value="TK0557"/>
</dbReference>
<dbReference type="GeneID" id="78447071"/>
<dbReference type="KEGG" id="tko:TK0557"/>
<dbReference type="PATRIC" id="fig|69014.16.peg.544"/>
<dbReference type="eggNOG" id="arCOG01034">
    <property type="taxonomic scope" value="Archaea"/>
</dbReference>
<dbReference type="HOGENOM" id="CLU_103145_1_1_2"/>
<dbReference type="InParanoid" id="Q5JF42"/>
<dbReference type="OrthoDB" id="52698at2157"/>
<dbReference type="PhylomeDB" id="Q5JF42"/>
<dbReference type="Proteomes" id="UP000000536">
    <property type="component" value="Chromosome"/>
</dbReference>
<dbReference type="GO" id="GO:0005524">
    <property type="term" value="F:ATP binding"/>
    <property type="evidence" value="ECO:0007669"/>
    <property type="project" value="UniProtKB-UniRule"/>
</dbReference>
<dbReference type="GO" id="GO:0016887">
    <property type="term" value="F:ATP hydrolysis activity"/>
    <property type="evidence" value="ECO:0007669"/>
    <property type="project" value="InterPro"/>
</dbReference>
<dbReference type="CDD" id="cd19482">
    <property type="entry name" value="RecA-like_Thep1"/>
    <property type="match status" value="1"/>
</dbReference>
<dbReference type="Gene3D" id="3.40.50.300">
    <property type="entry name" value="P-loop containing nucleotide triphosphate hydrolases"/>
    <property type="match status" value="1"/>
</dbReference>
<dbReference type="HAMAP" id="MF_00796">
    <property type="entry name" value="NTPase_1"/>
    <property type="match status" value="1"/>
</dbReference>
<dbReference type="InterPro" id="IPR003593">
    <property type="entry name" value="AAA+_ATPase"/>
</dbReference>
<dbReference type="InterPro" id="IPR004948">
    <property type="entry name" value="Nuc-triphosphatase_THEP1"/>
</dbReference>
<dbReference type="InterPro" id="IPR027417">
    <property type="entry name" value="P-loop_NTPase"/>
</dbReference>
<dbReference type="NCBIfam" id="NF010248">
    <property type="entry name" value="PRK13695.1"/>
    <property type="match status" value="1"/>
</dbReference>
<dbReference type="PANTHER" id="PTHR43146">
    <property type="entry name" value="CANCER-RELATED NUCLEOSIDE-TRIPHOSPHATASE"/>
    <property type="match status" value="1"/>
</dbReference>
<dbReference type="PANTHER" id="PTHR43146:SF1">
    <property type="entry name" value="CANCER-RELATED NUCLEOSIDE-TRIPHOSPHATASE"/>
    <property type="match status" value="1"/>
</dbReference>
<dbReference type="Pfam" id="PF03266">
    <property type="entry name" value="NTPase_1"/>
    <property type="match status" value="1"/>
</dbReference>
<dbReference type="SMART" id="SM00382">
    <property type="entry name" value="AAA"/>
    <property type="match status" value="1"/>
</dbReference>
<dbReference type="SUPFAM" id="SSF52540">
    <property type="entry name" value="P-loop containing nucleoside triphosphate hydrolases"/>
    <property type="match status" value="1"/>
</dbReference>
<gene>
    <name type="ordered locus">TK0557</name>
</gene>
<reference key="1">
    <citation type="journal article" date="2005" name="Genome Res.">
        <title>Complete genome sequence of the hyperthermophilic archaeon Thermococcus kodakaraensis KOD1 and comparison with Pyrococcus genomes.</title>
        <authorList>
            <person name="Fukui T."/>
            <person name="Atomi H."/>
            <person name="Kanai T."/>
            <person name="Matsumi R."/>
            <person name="Fujiwara S."/>
            <person name="Imanaka T."/>
        </authorList>
    </citation>
    <scope>NUCLEOTIDE SEQUENCE [LARGE SCALE GENOMIC DNA]</scope>
    <source>
        <strain>ATCC BAA-918 / JCM 12380 / KOD1</strain>
    </source>
</reference>
<name>NTPTH_THEKO</name>
<feature type="chain" id="PRO_0000146704" description="Nucleoside-triphosphatase THEP1">
    <location>
        <begin position="1"/>
        <end position="180"/>
    </location>
</feature>
<feature type="binding site" evidence="1">
    <location>
        <begin position="9"/>
        <end position="16"/>
    </location>
    <ligand>
        <name>ATP</name>
        <dbReference type="ChEBI" id="CHEBI:30616"/>
    </ligand>
</feature>
<feature type="binding site" evidence="1">
    <location>
        <begin position="104"/>
        <end position="111"/>
    </location>
    <ligand>
        <name>ATP</name>
        <dbReference type="ChEBI" id="CHEBI:30616"/>
    </ligand>
</feature>
<keyword id="KW-0067">ATP-binding</keyword>
<keyword id="KW-0378">Hydrolase</keyword>
<keyword id="KW-0547">Nucleotide-binding</keyword>
<keyword id="KW-1185">Reference proteome</keyword>
<organism>
    <name type="scientific">Thermococcus kodakarensis (strain ATCC BAA-918 / JCM 12380 / KOD1)</name>
    <name type="common">Pyrococcus kodakaraensis (strain KOD1)</name>
    <dbReference type="NCBI Taxonomy" id="69014"/>
    <lineage>
        <taxon>Archaea</taxon>
        <taxon>Methanobacteriati</taxon>
        <taxon>Methanobacteriota</taxon>
        <taxon>Thermococci</taxon>
        <taxon>Thermococcales</taxon>
        <taxon>Thermococcaceae</taxon>
        <taxon>Thermococcus</taxon>
    </lineage>
</organism>
<accession>Q5JF42</accession>
<sequence>MALRIFVTGPAGVGKTTLVERVAREVDRWGYIVGGVITREVRRGGRRIGFKITALDTGEEGTLASLRGTSHLPGVPFGKYVVHVDEIERVAVPAIRRAIVEADLIVIDEIGPMEYTSNEFIRAVGEVLKSEKPLLAVVHRKFIDRFRPLGEVHTLSFENRNAEFGIILDRVMKELKGIRG</sequence>
<evidence type="ECO:0000255" key="1">
    <source>
        <dbReference type="HAMAP-Rule" id="MF_00796"/>
    </source>
</evidence>